<organism evidence="7">
    <name type="scientific">Anisakis simplex</name>
    <name type="common">Herring worm</name>
    <dbReference type="NCBI Taxonomy" id="6269"/>
    <lineage>
        <taxon>Eukaryota</taxon>
        <taxon>Metazoa</taxon>
        <taxon>Ecdysozoa</taxon>
        <taxon>Nematoda</taxon>
        <taxon>Chromadorea</taxon>
        <taxon>Rhabditida</taxon>
        <taxon>Spirurina</taxon>
        <taxon>Ascaridomorpha</taxon>
        <taxon>Ascaridoidea</taxon>
        <taxon>Anisakidae</taxon>
        <taxon>Anisakis</taxon>
        <taxon>Anisakis simplex complex</taxon>
    </lineage>
</organism>
<keyword id="KW-0020">Allergen</keyword>
<keyword id="KW-1015">Disulfide bond</keyword>
<keyword id="KW-0646">Protease inhibitor</keyword>
<keyword id="KW-0964">Secreted</keyword>
<keyword id="KW-0722">Serine protease inhibitor</keyword>
<keyword id="KW-0732">Signal</keyword>
<name>TIL6_ANISI</name>
<proteinExistence type="evidence at protein level"/>
<dbReference type="EMBL" id="AB274999">
    <property type="protein sequence ID" value="BAF43535.1"/>
    <property type="molecule type" value="mRNA"/>
</dbReference>
<dbReference type="SMR" id="A1IKL3"/>
<dbReference type="Allergome" id="3767">
    <property type="allergen name" value="Ani s 6"/>
</dbReference>
<dbReference type="Allergome" id="3768">
    <property type="allergen name" value="Ani s 6.0101"/>
</dbReference>
<dbReference type="GO" id="GO:0005576">
    <property type="term" value="C:extracellular region"/>
    <property type="evidence" value="ECO:0007669"/>
    <property type="project" value="UniProtKB-SubCell"/>
</dbReference>
<dbReference type="GO" id="GO:0019863">
    <property type="term" value="F:IgE binding"/>
    <property type="evidence" value="ECO:0000314"/>
    <property type="project" value="UniProtKB"/>
</dbReference>
<dbReference type="GO" id="GO:0004867">
    <property type="term" value="F:serine-type endopeptidase inhibitor activity"/>
    <property type="evidence" value="ECO:0000314"/>
    <property type="project" value="UniProtKB"/>
</dbReference>
<dbReference type="CDD" id="cd19941">
    <property type="entry name" value="TIL"/>
    <property type="match status" value="1"/>
</dbReference>
<dbReference type="Gene3D" id="2.10.25.10">
    <property type="entry name" value="Laminin"/>
    <property type="match status" value="1"/>
</dbReference>
<dbReference type="InterPro" id="IPR036084">
    <property type="entry name" value="Ser_inhib-like_sf"/>
</dbReference>
<dbReference type="InterPro" id="IPR051368">
    <property type="entry name" value="SerProtInhib-TIL_Domain"/>
</dbReference>
<dbReference type="InterPro" id="IPR002919">
    <property type="entry name" value="TIL_dom"/>
</dbReference>
<dbReference type="PANTHER" id="PTHR23259:SF70">
    <property type="entry name" value="ACCESSORY GLAND PROTEIN ACP62F-RELATED"/>
    <property type="match status" value="1"/>
</dbReference>
<dbReference type="PANTHER" id="PTHR23259">
    <property type="entry name" value="RIDDLE"/>
    <property type="match status" value="1"/>
</dbReference>
<dbReference type="Pfam" id="PF01826">
    <property type="entry name" value="TIL"/>
    <property type="match status" value="1"/>
</dbReference>
<dbReference type="SUPFAM" id="SSF57567">
    <property type="entry name" value="Serine protease inhibitors"/>
    <property type="match status" value="1"/>
</dbReference>
<sequence>MFQSTFFLVLMVCVATARFANKDHCPPNEEYNECGNPCQEKCDNGEPVICTYQCEHRCFCKQGYVRLTEDGECVPEEFCKPIHY</sequence>
<protein>
    <recommendedName>
        <fullName evidence="5">Chymotrypsin inhibitor Ani s 6</fullName>
    </recommendedName>
    <allergenName evidence="4">Ani s 6</allergenName>
</protein>
<feature type="signal peptide" evidence="2">
    <location>
        <begin position="1"/>
        <end position="22"/>
    </location>
</feature>
<feature type="chain" id="PRO_5002635037" description="Chymotrypsin inhibitor Ani s 6" evidence="2">
    <location>
        <begin position="23"/>
        <end position="84"/>
    </location>
</feature>
<feature type="domain" description="TIL" evidence="2">
    <location>
        <begin position="25"/>
        <end position="79"/>
    </location>
</feature>
<feature type="disulfide bond" evidence="1">
    <location>
        <begin position="25"/>
        <end position="58"/>
    </location>
</feature>
<feature type="disulfide bond" evidence="1">
    <location>
        <begin position="34"/>
        <end position="54"/>
    </location>
</feature>
<feature type="disulfide bond" evidence="1">
    <location>
        <begin position="38"/>
        <end position="50"/>
    </location>
</feature>
<feature type="disulfide bond" evidence="1">
    <location>
        <begin position="42"/>
        <end position="79"/>
    </location>
</feature>
<feature type="disulfide bond" evidence="1">
    <location>
        <begin position="60"/>
        <end position="73"/>
    </location>
</feature>
<accession>A1IKL3</accession>
<reference evidence="7" key="1">
    <citation type="journal article" date="2007" name="Parasitol. Res.">
        <title>Molecular cloning and expression of two new allergens from Anisakis simplex.</title>
        <authorList>
            <person name="Kobayashi Y."/>
            <person name="Ishizaki S."/>
            <person name="Shimakura K."/>
            <person name="Nagashima Y."/>
            <person name="Shiomi K."/>
        </authorList>
    </citation>
    <scope>NUCLEOTIDE SEQUENCE [MRNA]</scope>
    <scope>FUNCTION</scope>
    <scope>ALLERGEN</scope>
    <source>
        <tissue evidence="4">Larva</tissue>
    </source>
</reference>
<comment type="function">
    <text evidence="3">Inhibits alpha-chymotrypsin, but not trypsin.</text>
</comment>
<comment type="subcellular location">
    <subcellularLocation>
        <location evidence="6">Secreted</location>
    </subcellularLocation>
</comment>
<comment type="allergen">
    <text evidence="3">Causes an allergic reaction in human. Binds to IgE. A.simplex is a fish parasite that, when accidentally ingested by humans, may cause allergic reactions in sensitized individuals.</text>
</comment>
<comment type="similarity">
    <text evidence="5">Belongs to the serine protease inhibitor-like (TIL domain-containing) family.</text>
</comment>
<evidence type="ECO:0000250" key="1">
    <source>
        <dbReference type="UniProtKB" id="P07851"/>
    </source>
</evidence>
<evidence type="ECO:0000255" key="2"/>
<evidence type="ECO:0000269" key="3">
    <source>
    </source>
</evidence>
<evidence type="ECO:0000303" key="4">
    <source>
    </source>
</evidence>
<evidence type="ECO:0000305" key="5"/>
<evidence type="ECO:0000305" key="6">
    <source>
    </source>
</evidence>
<evidence type="ECO:0000312" key="7">
    <source>
        <dbReference type="EMBL" id="BAF43535.1"/>
    </source>
</evidence>